<dbReference type="EC" id="4.2.1.22" evidence="2"/>
<dbReference type="EMBL" id="AK077669">
    <property type="protein sequence ID" value="BAC36943.1"/>
    <property type="molecule type" value="mRNA"/>
</dbReference>
<dbReference type="EMBL" id="BC013472">
    <property type="protein sequence ID" value="AAH13472.1"/>
    <property type="molecule type" value="mRNA"/>
</dbReference>
<dbReference type="EMBL" id="BC013480">
    <property type="protein sequence ID" value="AAH13480.1"/>
    <property type="molecule type" value="mRNA"/>
</dbReference>
<dbReference type="EMBL" id="BC026595">
    <property type="protein sequence ID" value="AAH26595.1"/>
    <property type="molecule type" value="mRNA"/>
</dbReference>
<dbReference type="CCDS" id="CCDS28609.1">
    <molecule id="Q91WT9-1"/>
</dbReference>
<dbReference type="CCDS" id="CCDS28610.1">
    <molecule id="Q91WT9-2"/>
</dbReference>
<dbReference type="RefSeq" id="NP_001258282.1">
    <molecule id="Q91WT9-2"/>
    <property type="nucleotide sequence ID" value="NM_001271353.2"/>
</dbReference>
<dbReference type="RefSeq" id="NP_001396941.1">
    <molecule id="Q91WT9-1"/>
    <property type="nucleotide sequence ID" value="NM_001410012.1"/>
</dbReference>
<dbReference type="RefSeq" id="NP_659104.1">
    <molecule id="Q91WT9-1"/>
    <property type="nucleotide sequence ID" value="NM_144855.4"/>
</dbReference>
<dbReference type="RefSeq" id="NP_835742.1">
    <molecule id="Q91WT9-2"/>
    <property type="nucleotide sequence ID" value="NM_178224.4"/>
</dbReference>
<dbReference type="RefSeq" id="XP_006523612.1">
    <molecule id="Q91WT9-1"/>
    <property type="nucleotide sequence ID" value="XM_006523549.4"/>
</dbReference>
<dbReference type="RefSeq" id="XP_006523613.1">
    <property type="nucleotide sequence ID" value="XM_006523550.3"/>
</dbReference>
<dbReference type="RefSeq" id="XP_006523614.1">
    <molecule id="Q91WT9-1"/>
    <property type="nucleotide sequence ID" value="XM_006523551.4"/>
</dbReference>
<dbReference type="SMR" id="Q91WT9"/>
<dbReference type="BioGRID" id="198533">
    <property type="interactions" value="8"/>
</dbReference>
<dbReference type="DIP" id="DIP-60823N"/>
<dbReference type="FunCoup" id="Q91WT9">
    <property type="interactions" value="967"/>
</dbReference>
<dbReference type="IntAct" id="Q91WT9">
    <property type="interactions" value="1"/>
</dbReference>
<dbReference type="STRING" id="10090.ENSMUSP00000158269"/>
<dbReference type="GlyGen" id="Q91WT9">
    <property type="glycosylation" value="1 site"/>
</dbReference>
<dbReference type="iPTMnet" id="Q91WT9"/>
<dbReference type="PhosphoSitePlus" id="Q91WT9"/>
<dbReference type="SwissPalm" id="Q91WT9"/>
<dbReference type="jPOST" id="Q91WT9"/>
<dbReference type="PaxDb" id="10090-ENSMUSP00000066878"/>
<dbReference type="PeptideAtlas" id="Q91WT9"/>
<dbReference type="ProteomicsDB" id="281411">
    <molecule id="Q91WT9-1"/>
</dbReference>
<dbReference type="ProteomicsDB" id="281412">
    <molecule id="Q91WT9-2"/>
</dbReference>
<dbReference type="DNASU" id="12411"/>
<dbReference type="Ensembl" id="ENSMUST00000067801.14">
    <molecule id="Q91WT9-1"/>
    <property type="protein sequence ID" value="ENSMUSP00000066878.7"/>
    <property type="gene ID" value="ENSMUSG00000024039.16"/>
</dbReference>
<dbReference type="Ensembl" id="ENSMUST00000078509.12">
    <molecule id="Q91WT9-2"/>
    <property type="protein sequence ID" value="ENSMUSP00000077597.6"/>
    <property type="gene ID" value="ENSMUSG00000024039.16"/>
</dbReference>
<dbReference type="Ensembl" id="ENSMUST00000118504.9">
    <molecule id="Q91WT9-2"/>
    <property type="protein sequence ID" value="ENSMUSP00000113209.2"/>
    <property type="gene ID" value="ENSMUSG00000024039.16"/>
</dbReference>
<dbReference type="Ensembl" id="ENSMUST00000236853.2">
    <molecule id="Q91WT9-1"/>
    <property type="protein sequence ID" value="ENSMUSP00000158269.2"/>
    <property type="gene ID" value="ENSMUSG00000024039.16"/>
</dbReference>
<dbReference type="GeneID" id="12411"/>
<dbReference type="KEGG" id="mmu:12411"/>
<dbReference type="UCSC" id="uc008bvl.2">
    <molecule id="Q91WT9-1"/>
    <property type="organism name" value="mouse"/>
</dbReference>
<dbReference type="UCSC" id="uc008bvm.2">
    <molecule id="Q91WT9-2"/>
    <property type="organism name" value="mouse"/>
</dbReference>
<dbReference type="AGR" id="MGI:88285"/>
<dbReference type="CTD" id="875"/>
<dbReference type="MGI" id="MGI:88285">
    <property type="gene designation" value="Cbs"/>
</dbReference>
<dbReference type="VEuPathDB" id="HostDB:ENSMUSG00000024039"/>
<dbReference type="eggNOG" id="KOG1252">
    <property type="taxonomic scope" value="Eukaryota"/>
</dbReference>
<dbReference type="GeneTree" id="ENSGT00510000047027"/>
<dbReference type="HOGENOM" id="CLU_021018_0_0_1"/>
<dbReference type="InParanoid" id="Q91WT9"/>
<dbReference type="OMA" id="KFADDEW"/>
<dbReference type="OrthoDB" id="728at2759"/>
<dbReference type="PhylomeDB" id="Q91WT9"/>
<dbReference type="TreeFam" id="TF300784"/>
<dbReference type="BRENDA" id="4.2.1.22">
    <property type="organism ID" value="3474"/>
</dbReference>
<dbReference type="Reactome" id="R-MMU-1614603">
    <property type="pathway name" value="Cysteine formation from homocysteine"/>
</dbReference>
<dbReference type="UniPathway" id="UPA00136">
    <property type="reaction ID" value="UER00201"/>
</dbReference>
<dbReference type="BioGRID-ORCS" id="12411">
    <property type="hits" value="0 hits in 77 CRISPR screens"/>
</dbReference>
<dbReference type="ChiTaRS" id="Cbs">
    <property type="organism name" value="mouse"/>
</dbReference>
<dbReference type="PRO" id="PR:Q91WT9"/>
<dbReference type="Proteomes" id="UP000000589">
    <property type="component" value="Chromosome 17"/>
</dbReference>
<dbReference type="RNAct" id="Q91WT9">
    <property type="molecule type" value="protein"/>
</dbReference>
<dbReference type="Bgee" id="ENSMUSG00000024039">
    <property type="expression patterns" value="Expressed in left lobe of liver and 177 other cell types or tissues"/>
</dbReference>
<dbReference type="ExpressionAtlas" id="Q91WT9">
    <property type="expression patterns" value="baseline and differential"/>
</dbReference>
<dbReference type="GO" id="GO:0005737">
    <property type="term" value="C:cytoplasm"/>
    <property type="evidence" value="ECO:0000250"/>
    <property type="project" value="UniProtKB"/>
</dbReference>
<dbReference type="GO" id="GO:0005634">
    <property type="term" value="C:nucleus"/>
    <property type="evidence" value="ECO:0000250"/>
    <property type="project" value="UniProtKB"/>
</dbReference>
<dbReference type="GO" id="GO:0070025">
    <property type="term" value="F:carbon monoxide binding"/>
    <property type="evidence" value="ECO:0007669"/>
    <property type="project" value="Ensembl"/>
</dbReference>
<dbReference type="GO" id="GO:0004122">
    <property type="term" value="F:cystathionine beta-synthase activity"/>
    <property type="evidence" value="ECO:0000315"/>
    <property type="project" value="MGI"/>
</dbReference>
<dbReference type="GO" id="GO:0020037">
    <property type="term" value="F:heme binding"/>
    <property type="evidence" value="ECO:0007669"/>
    <property type="project" value="Ensembl"/>
</dbReference>
<dbReference type="GO" id="GO:0046872">
    <property type="term" value="F:metal ion binding"/>
    <property type="evidence" value="ECO:0007669"/>
    <property type="project" value="UniProtKB-KW"/>
</dbReference>
<dbReference type="GO" id="GO:0072341">
    <property type="term" value="F:modified amino acid binding"/>
    <property type="evidence" value="ECO:0007669"/>
    <property type="project" value="Ensembl"/>
</dbReference>
<dbReference type="GO" id="GO:0070026">
    <property type="term" value="F:nitric oxide binding"/>
    <property type="evidence" value="ECO:0007669"/>
    <property type="project" value="Ensembl"/>
</dbReference>
<dbReference type="GO" id="GO:0050421">
    <property type="term" value="F:nitrite reductase (NO-forming) activity"/>
    <property type="evidence" value="ECO:0007669"/>
    <property type="project" value="Ensembl"/>
</dbReference>
<dbReference type="GO" id="GO:0019825">
    <property type="term" value="F:oxygen binding"/>
    <property type="evidence" value="ECO:0007669"/>
    <property type="project" value="Ensembl"/>
</dbReference>
<dbReference type="GO" id="GO:0042803">
    <property type="term" value="F:protein homodimerization activity"/>
    <property type="evidence" value="ECO:0000250"/>
    <property type="project" value="UniProtKB"/>
</dbReference>
<dbReference type="GO" id="GO:0030170">
    <property type="term" value="F:pyridoxal phosphate binding"/>
    <property type="evidence" value="ECO:0000250"/>
    <property type="project" value="UniProtKB"/>
</dbReference>
<dbReference type="GO" id="GO:1904047">
    <property type="term" value="F:S-adenosyl-L-methionine binding"/>
    <property type="evidence" value="ECO:0007669"/>
    <property type="project" value="Ensembl"/>
</dbReference>
<dbReference type="GO" id="GO:0031625">
    <property type="term" value="F:ubiquitin protein ligase binding"/>
    <property type="evidence" value="ECO:0007669"/>
    <property type="project" value="Ensembl"/>
</dbReference>
<dbReference type="GO" id="GO:0097746">
    <property type="term" value="P:blood vessel diameter maintenance"/>
    <property type="evidence" value="ECO:0000315"/>
    <property type="project" value="MGI"/>
</dbReference>
<dbReference type="GO" id="GO:0001974">
    <property type="term" value="P:blood vessel remodeling"/>
    <property type="evidence" value="ECO:0000315"/>
    <property type="project" value="MGI"/>
</dbReference>
<dbReference type="GO" id="GO:0060351">
    <property type="term" value="P:cartilage development involved in endochondral bone morphogenesis"/>
    <property type="evidence" value="ECO:0000315"/>
    <property type="project" value="MGI"/>
</dbReference>
<dbReference type="GO" id="GO:0071456">
    <property type="term" value="P:cellular response to hypoxia"/>
    <property type="evidence" value="ECO:0007669"/>
    <property type="project" value="Ensembl"/>
</dbReference>
<dbReference type="GO" id="GO:0021587">
    <property type="term" value="P:cerebellum morphogenesis"/>
    <property type="evidence" value="ECO:0000315"/>
    <property type="project" value="MGI"/>
</dbReference>
<dbReference type="GO" id="GO:0019344">
    <property type="term" value="P:cysteine biosynthetic process"/>
    <property type="evidence" value="ECO:0000315"/>
    <property type="project" value="MGI"/>
</dbReference>
<dbReference type="GO" id="GO:0006535">
    <property type="term" value="P:cysteine biosynthetic process from serine"/>
    <property type="evidence" value="ECO:0007669"/>
    <property type="project" value="InterPro"/>
</dbReference>
<dbReference type="GO" id="GO:0019343">
    <property type="term" value="P:cysteine biosynthetic process via cystathionine"/>
    <property type="evidence" value="ECO:0007669"/>
    <property type="project" value="InterPro"/>
</dbReference>
<dbReference type="GO" id="GO:0042262">
    <property type="term" value="P:DNA protection"/>
    <property type="evidence" value="ECO:0007669"/>
    <property type="project" value="Ensembl"/>
</dbReference>
<dbReference type="GO" id="GO:0001958">
    <property type="term" value="P:endochondral ossification"/>
    <property type="evidence" value="ECO:0000315"/>
    <property type="project" value="MGI"/>
</dbReference>
<dbReference type="GO" id="GO:0043418">
    <property type="term" value="P:homocysteine catabolic process"/>
    <property type="evidence" value="ECO:0000250"/>
    <property type="project" value="UniProtKB"/>
</dbReference>
<dbReference type="GO" id="GO:0050667">
    <property type="term" value="P:homocysteine metabolic process"/>
    <property type="evidence" value="ECO:0000315"/>
    <property type="project" value="MGI"/>
</dbReference>
<dbReference type="GO" id="GO:0070814">
    <property type="term" value="P:hydrogen sulfide biosynthetic process"/>
    <property type="evidence" value="ECO:0000250"/>
    <property type="project" value="UniProtKB"/>
</dbReference>
<dbReference type="GO" id="GO:0019448">
    <property type="term" value="P:L-cysteine catabolic process"/>
    <property type="evidence" value="ECO:0007669"/>
    <property type="project" value="Ensembl"/>
</dbReference>
<dbReference type="GO" id="GO:0006565">
    <property type="term" value="P:L-serine catabolic process"/>
    <property type="evidence" value="ECO:0007669"/>
    <property type="project" value="Ensembl"/>
</dbReference>
<dbReference type="GO" id="GO:0006563">
    <property type="term" value="P:L-serine metabolic process"/>
    <property type="evidence" value="ECO:0000250"/>
    <property type="project" value="UniProtKB"/>
</dbReference>
<dbReference type="GO" id="GO:0060135">
    <property type="term" value="P:maternal process involved in female pregnancy"/>
    <property type="evidence" value="ECO:0000315"/>
    <property type="project" value="MGI"/>
</dbReference>
<dbReference type="GO" id="GO:0043066">
    <property type="term" value="P:negative regulation of apoptotic process"/>
    <property type="evidence" value="ECO:0007669"/>
    <property type="project" value="Ensembl"/>
</dbReference>
<dbReference type="GO" id="GO:0046328">
    <property type="term" value="P:regulation of JNK cascade"/>
    <property type="evidence" value="ECO:0000315"/>
    <property type="project" value="MGI"/>
</dbReference>
<dbReference type="GO" id="GO:0010749">
    <property type="term" value="P:regulation of nitric oxide mediated signal transduction"/>
    <property type="evidence" value="ECO:0000315"/>
    <property type="project" value="MGI"/>
</dbReference>
<dbReference type="GO" id="GO:0051593">
    <property type="term" value="P:response to folic acid"/>
    <property type="evidence" value="ECO:0000315"/>
    <property type="project" value="MGI"/>
</dbReference>
<dbReference type="GO" id="GO:0006801">
    <property type="term" value="P:superoxide metabolic process"/>
    <property type="evidence" value="ECO:0000315"/>
    <property type="project" value="MGI"/>
</dbReference>
<dbReference type="GO" id="GO:0019346">
    <property type="term" value="P:transsulfuration"/>
    <property type="evidence" value="ECO:0007669"/>
    <property type="project" value="Ensembl"/>
</dbReference>
<dbReference type="CDD" id="cd01561">
    <property type="entry name" value="CBS_like"/>
    <property type="match status" value="1"/>
</dbReference>
<dbReference type="CDD" id="cd04608">
    <property type="entry name" value="CBS_pair_CBS"/>
    <property type="match status" value="1"/>
</dbReference>
<dbReference type="FunFam" id="3.10.580.10:FF:000014">
    <property type="entry name" value="Cystathionine beta-synthase"/>
    <property type="match status" value="1"/>
</dbReference>
<dbReference type="FunFam" id="3.40.50.1100:FF:000003">
    <property type="entry name" value="Cystathionine beta-synthase"/>
    <property type="match status" value="1"/>
</dbReference>
<dbReference type="FunFam" id="3.40.50.1100:FF:000118">
    <property type="entry name" value="Related to CYS4-cystathionine beta-synthase"/>
    <property type="match status" value="1"/>
</dbReference>
<dbReference type="Gene3D" id="3.40.50.1100">
    <property type="match status" value="2"/>
</dbReference>
<dbReference type="Gene3D" id="3.10.580.10">
    <property type="entry name" value="CBS-domain"/>
    <property type="match status" value="1"/>
</dbReference>
<dbReference type="InterPro" id="IPR046353">
    <property type="entry name" value="CBS_C"/>
</dbReference>
<dbReference type="InterPro" id="IPR000644">
    <property type="entry name" value="CBS_dom"/>
</dbReference>
<dbReference type="InterPro" id="IPR046342">
    <property type="entry name" value="CBS_dom_sf"/>
</dbReference>
<dbReference type="InterPro" id="IPR050214">
    <property type="entry name" value="Cys_Synth/Cystath_Beta-Synth"/>
</dbReference>
<dbReference type="InterPro" id="IPR005857">
    <property type="entry name" value="Cysta_beta_synth"/>
</dbReference>
<dbReference type="InterPro" id="IPR001216">
    <property type="entry name" value="P-phosphate_BS"/>
</dbReference>
<dbReference type="InterPro" id="IPR001926">
    <property type="entry name" value="TrpB-like_PALP"/>
</dbReference>
<dbReference type="InterPro" id="IPR036052">
    <property type="entry name" value="TrpB-like_PALP_sf"/>
</dbReference>
<dbReference type="NCBIfam" id="TIGR01137">
    <property type="entry name" value="cysta_beta"/>
    <property type="match status" value="1"/>
</dbReference>
<dbReference type="PANTHER" id="PTHR10314">
    <property type="entry name" value="CYSTATHIONINE BETA-SYNTHASE"/>
    <property type="match status" value="1"/>
</dbReference>
<dbReference type="Pfam" id="PF00571">
    <property type="entry name" value="CBS"/>
    <property type="match status" value="1"/>
</dbReference>
<dbReference type="Pfam" id="PF00291">
    <property type="entry name" value="PALP"/>
    <property type="match status" value="1"/>
</dbReference>
<dbReference type="SMART" id="SM00116">
    <property type="entry name" value="CBS"/>
    <property type="match status" value="1"/>
</dbReference>
<dbReference type="SUPFAM" id="SSF54631">
    <property type="entry name" value="CBS-domain pair"/>
    <property type="match status" value="1"/>
</dbReference>
<dbReference type="SUPFAM" id="SSF53686">
    <property type="entry name" value="Tryptophan synthase beta subunit-like PLP-dependent enzymes"/>
    <property type="match status" value="1"/>
</dbReference>
<dbReference type="PROSITE" id="PS51371">
    <property type="entry name" value="CBS"/>
    <property type="match status" value="1"/>
</dbReference>
<dbReference type="PROSITE" id="PS00901">
    <property type="entry name" value="CYS_SYNTHASE"/>
    <property type="match status" value="1"/>
</dbReference>
<gene>
    <name type="primary">Cbs</name>
</gene>
<comment type="function">
    <text evidence="1 2">Hydro-lyase catalyzing the first step of the transsulfuration pathway, where the hydroxyl group of L-serine is displaced by L-homocysteine in a beta-replacement reaction to form L-cystathionine, the precursor of L-cysteine. This catabolic route allows the elimination of L-methionine and the toxic metabolite L-homocysteine (By similarity). Also involved in the production of hydrogen sulfide, a gasotransmitter with signaling and cytoprotective effects on neurons (By similarity).</text>
</comment>
<comment type="catalytic activity">
    <reaction evidence="2">
        <text>L-homocysteine + L-serine = L,L-cystathionine + H2O</text>
        <dbReference type="Rhea" id="RHEA:10112"/>
        <dbReference type="ChEBI" id="CHEBI:15377"/>
        <dbReference type="ChEBI" id="CHEBI:33384"/>
        <dbReference type="ChEBI" id="CHEBI:58161"/>
        <dbReference type="ChEBI" id="CHEBI:58199"/>
        <dbReference type="EC" id="4.2.1.22"/>
    </reaction>
</comment>
<comment type="cofactor">
    <cofactor evidence="2">
        <name>pyridoxal 5'-phosphate</name>
        <dbReference type="ChEBI" id="CHEBI:597326"/>
    </cofactor>
</comment>
<comment type="activity regulation">
    <text evidence="2">Allosterically activated by S-adenosyl-methionine/AdoMet. Activated by S-adenosylhomocysteine/AdoHcy. Binds non-covalently to a heme group that may control the redox sensitivity of the enzyme.</text>
</comment>
<comment type="pathway">
    <text evidence="2">Amino-acid biosynthesis; L-cysteine biosynthesis; L-cysteine from L-homocysteine and L-serine: step 1/2.</text>
</comment>
<comment type="subunit">
    <text evidence="2">Homotetramer.</text>
</comment>
<comment type="subcellular location">
    <subcellularLocation>
        <location evidence="2">Cytoplasm</location>
    </subcellularLocation>
    <subcellularLocation>
        <location evidence="2">Nucleus</location>
    </subcellularLocation>
</comment>
<comment type="alternative products">
    <event type="alternative splicing"/>
    <isoform>
        <id>Q91WT9-1</id>
        <name>1</name>
        <sequence type="displayed"/>
    </isoform>
    <isoform>
        <id>Q91WT9-2</id>
        <name>2</name>
        <sequence type="described" ref="VSP_021790"/>
    </isoform>
</comment>
<comment type="similarity">
    <text evidence="6">Belongs to the cysteine synthase/cystathionine beta-synthase family.</text>
</comment>
<reference key="1">
    <citation type="journal article" date="2005" name="Science">
        <title>The transcriptional landscape of the mammalian genome.</title>
        <authorList>
            <person name="Carninci P."/>
            <person name="Kasukawa T."/>
            <person name="Katayama S."/>
            <person name="Gough J."/>
            <person name="Frith M.C."/>
            <person name="Maeda N."/>
            <person name="Oyama R."/>
            <person name="Ravasi T."/>
            <person name="Lenhard B."/>
            <person name="Wells C."/>
            <person name="Kodzius R."/>
            <person name="Shimokawa K."/>
            <person name="Bajic V.B."/>
            <person name="Brenner S.E."/>
            <person name="Batalov S."/>
            <person name="Forrest A.R."/>
            <person name="Zavolan M."/>
            <person name="Davis M.J."/>
            <person name="Wilming L.G."/>
            <person name="Aidinis V."/>
            <person name="Allen J.E."/>
            <person name="Ambesi-Impiombato A."/>
            <person name="Apweiler R."/>
            <person name="Aturaliya R.N."/>
            <person name="Bailey T.L."/>
            <person name="Bansal M."/>
            <person name="Baxter L."/>
            <person name="Beisel K.W."/>
            <person name="Bersano T."/>
            <person name="Bono H."/>
            <person name="Chalk A.M."/>
            <person name="Chiu K.P."/>
            <person name="Choudhary V."/>
            <person name="Christoffels A."/>
            <person name="Clutterbuck D.R."/>
            <person name="Crowe M.L."/>
            <person name="Dalla E."/>
            <person name="Dalrymple B.P."/>
            <person name="de Bono B."/>
            <person name="Della Gatta G."/>
            <person name="di Bernardo D."/>
            <person name="Down T."/>
            <person name="Engstrom P."/>
            <person name="Fagiolini M."/>
            <person name="Faulkner G."/>
            <person name="Fletcher C.F."/>
            <person name="Fukushima T."/>
            <person name="Furuno M."/>
            <person name="Futaki S."/>
            <person name="Gariboldi M."/>
            <person name="Georgii-Hemming P."/>
            <person name="Gingeras T.R."/>
            <person name="Gojobori T."/>
            <person name="Green R.E."/>
            <person name="Gustincich S."/>
            <person name="Harbers M."/>
            <person name="Hayashi Y."/>
            <person name="Hensch T.K."/>
            <person name="Hirokawa N."/>
            <person name="Hill D."/>
            <person name="Huminiecki L."/>
            <person name="Iacono M."/>
            <person name="Ikeo K."/>
            <person name="Iwama A."/>
            <person name="Ishikawa T."/>
            <person name="Jakt M."/>
            <person name="Kanapin A."/>
            <person name="Katoh M."/>
            <person name="Kawasawa Y."/>
            <person name="Kelso J."/>
            <person name="Kitamura H."/>
            <person name="Kitano H."/>
            <person name="Kollias G."/>
            <person name="Krishnan S.P."/>
            <person name="Kruger A."/>
            <person name="Kummerfeld S.K."/>
            <person name="Kurochkin I.V."/>
            <person name="Lareau L.F."/>
            <person name="Lazarevic D."/>
            <person name="Lipovich L."/>
            <person name="Liu J."/>
            <person name="Liuni S."/>
            <person name="McWilliam S."/>
            <person name="Madan Babu M."/>
            <person name="Madera M."/>
            <person name="Marchionni L."/>
            <person name="Matsuda H."/>
            <person name="Matsuzawa S."/>
            <person name="Miki H."/>
            <person name="Mignone F."/>
            <person name="Miyake S."/>
            <person name="Morris K."/>
            <person name="Mottagui-Tabar S."/>
            <person name="Mulder N."/>
            <person name="Nakano N."/>
            <person name="Nakauchi H."/>
            <person name="Ng P."/>
            <person name="Nilsson R."/>
            <person name="Nishiguchi S."/>
            <person name="Nishikawa S."/>
            <person name="Nori F."/>
            <person name="Ohara O."/>
            <person name="Okazaki Y."/>
            <person name="Orlando V."/>
            <person name="Pang K.C."/>
            <person name="Pavan W.J."/>
            <person name="Pavesi G."/>
            <person name="Pesole G."/>
            <person name="Petrovsky N."/>
            <person name="Piazza S."/>
            <person name="Reed J."/>
            <person name="Reid J.F."/>
            <person name="Ring B.Z."/>
            <person name="Ringwald M."/>
            <person name="Rost B."/>
            <person name="Ruan Y."/>
            <person name="Salzberg S.L."/>
            <person name="Sandelin A."/>
            <person name="Schneider C."/>
            <person name="Schoenbach C."/>
            <person name="Sekiguchi K."/>
            <person name="Semple C.A."/>
            <person name="Seno S."/>
            <person name="Sessa L."/>
            <person name="Sheng Y."/>
            <person name="Shibata Y."/>
            <person name="Shimada H."/>
            <person name="Shimada K."/>
            <person name="Silva D."/>
            <person name="Sinclair B."/>
            <person name="Sperling S."/>
            <person name="Stupka E."/>
            <person name="Sugiura K."/>
            <person name="Sultana R."/>
            <person name="Takenaka Y."/>
            <person name="Taki K."/>
            <person name="Tammoja K."/>
            <person name="Tan S.L."/>
            <person name="Tang S."/>
            <person name="Taylor M.S."/>
            <person name="Tegner J."/>
            <person name="Teichmann S.A."/>
            <person name="Ueda H.R."/>
            <person name="van Nimwegen E."/>
            <person name="Verardo R."/>
            <person name="Wei C.L."/>
            <person name="Yagi K."/>
            <person name="Yamanishi H."/>
            <person name="Zabarovsky E."/>
            <person name="Zhu S."/>
            <person name="Zimmer A."/>
            <person name="Hide W."/>
            <person name="Bult C."/>
            <person name="Grimmond S.M."/>
            <person name="Teasdale R.D."/>
            <person name="Liu E.T."/>
            <person name="Brusic V."/>
            <person name="Quackenbush J."/>
            <person name="Wahlestedt C."/>
            <person name="Mattick J.S."/>
            <person name="Hume D.A."/>
            <person name="Kai C."/>
            <person name="Sasaki D."/>
            <person name="Tomaru Y."/>
            <person name="Fukuda S."/>
            <person name="Kanamori-Katayama M."/>
            <person name="Suzuki M."/>
            <person name="Aoki J."/>
            <person name="Arakawa T."/>
            <person name="Iida J."/>
            <person name="Imamura K."/>
            <person name="Itoh M."/>
            <person name="Kato T."/>
            <person name="Kawaji H."/>
            <person name="Kawagashira N."/>
            <person name="Kawashima T."/>
            <person name="Kojima M."/>
            <person name="Kondo S."/>
            <person name="Konno H."/>
            <person name="Nakano K."/>
            <person name="Ninomiya N."/>
            <person name="Nishio T."/>
            <person name="Okada M."/>
            <person name="Plessy C."/>
            <person name="Shibata K."/>
            <person name="Shiraki T."/>
            <person name="Suzuki S."/>
            <person name="Tagami M."/>
            <person name="Waki K."/>
            <person name="Watahiki A."/>
            <person name="Okamura-Oho Y."/>
            <person name="Suzuki H."/>
            <person name="Kawai J."/>
            <person name="Hayashizaki Y."/>
        </authorList>
    </citation>
    <scope>NUCLEOTIDE SEQUENCE [LARGE SCALE MRNA] (ISOFORM 2)</scope>
    <source>
        <strain>C57BL/6J</strain>
    </source>
</reference>
<reference key="2">
    <citation type="journal article" date="2004" name="Genome Res.">
        <title>The status, quality, and expansion of the NIH full-length cDNA project: the Mammalian Gene Collection (MGC).</title>
        <authorList>
            <consortium name="The MGC Project Team"/>
        </authorList>
    </citation>
    <scope>NUCLEOTIDE SEQUENCE [LARGE SCALE MRNA] (ISOFORMS 1 AND 2)</scope>
    <source>
        <tissue>Kidney</tissue>
    </source>
</reference>
<reference key="3">
    <citation type="journal article" date="2010" name="Cell">
        <title>A tissue-specific atlas of mouse protein phosphorylation and expression.</title>
        <authorList>
            <person name="Huttlin E.L."/>
            <person name="Jedrychowski M.P."/>
            <person name="Elias J.E."/>
            <person name="Goswami T."/>
            <person name="Rad R."/>
            <person name="Beausoleil S.A."/>
            <person name="Villen J."/>
            <person name="Haas W."/>
            <person name="Sowa M.E."/>
            <person name="Gygi S.P."/>
        </authorList>
    </citation>
    <scope>IDENTIFICATION BY MASS SPECTROMETRY [LARGE SCALE ANALYSIS]</scope>
    <source>
        <tissue>Brain</tissue>
        <tissue>Kidney</tissue>
        <tissue>Liver</tissue>
        <tissue>Pancreas</tissue>
        <tissue>Spleen</tissue>
    </source>
</reference>
<sequence length="561" mass="61544">MPSGTSQCEDGSAGGFQHLDMHSEKRQLEKGPSGDKDRVWIRPDTPSRCTWQLGRAMADSPHYHTVLTKSPKILPDILRKIGNTPMVRINKISKNAGLKCELLAKCEFFNAGGSVKDRISLRMIEDAERAGNLKPGDTIIEPTSGNTGIGLALAAAVKGYRCIIVMPEKMSMEKVDVLRALGAEIVRTPTNARFDSPESHVGVAWRLKNEIPNSHILDQYRNASNPLAHYDDTAEEILQQCDGKLDMLVASAGTGGTITGIARKLKEKCPGCKIIGVDPEGSILAEPEELNQTEQTAYEVEGIGYDFIPTVLDRAVVDKWFKSNDEDSFAFARMLIAQEGLLCGGSSGSAMAVAVKAARELQEGQRCVVILPDSVRNYMSKFLSDKWMLQKGFMKEELSVKRPWWWRLRVQELSLSAPLTVLPTVTCEDTIAILREKGFDQAPVVNESGAILGMVTLGNMLSSLLAGKVRPSDEVCKVLYKQFKPIHLTDTLGTLSHILEMDHFALVVHEQIQSRDQAWSGVVGGPTDCSNGMSSKQQMVFGVVTAIDLLNFVAAREQTQT</sequence>
<name>CBS_MOUSE</name>
<proteinExistence type="evidence at protein level"/>
<keyword id="KW-0025">Alternative splicing</keyword>
<keyword id="KW-0028">Amino-acid biosynthesis</keyword>
<keyword id="KW-0129">CBS domain</keyword>
<keyword id="KW-0198">Cysteine biosynthesis</keyword>
<keyword id="KW-0963">Cytoplasm</keyword>
<keyword id="KW-0349">Heme</keyword>
<keyword id="KW-0408">Iron</keyword>
<keyword id="KW-1017">Isopeptide bond</keyword>
<keyword id="KW-0456">Lyase</keyword>
<keyword id="KW-0479">Metal-binding</keyword>
<keyword id="KW-0539">Nucleus</keyword>
<keyword id="KW-0597">Phosphoprotein</keyword>
<keyword id="KW-0663">Pyridoxal phosphate</keyword>
<keyword id="KW-1185">Reference proteome</keyword>
<keyword id="KW-0832">Ubl conjugation</keyword>
<organism>
    <name type="scientific">Mus musculus</name>
    <name type="common">Mouse</name>
    <dbReference type="NCBI Taxonomy" id="10090"/>
    <lineage>
        <taxon>Eukaryota</taxon>
        <taxon>Metazoa</taxon>
        <taxon>Chordata</taxon>
        <taxon>Craniata</taxon>
        <taxon>Vertebrata</taxon>
        <taxon>Euteleostomi</taxon>
        <taxon>Mammalia</taxon>
        <taxon>Eutheria</taxon>
        <taxon>Euarchontoglires</taxon>
        <taxon>Glires</taxon>
        <taxon>Rodentia</taxon>
        <taxon>Myomorpha</taxon>
        <taxon>Muroidea</taxon>
        <taxon>Muridae</taxon>
        <taxon>Murinae</taxon>
        <taxon>Mus</taxon>
        <taxon>Mus</taxon>
    </lineage>
</organism>
<evidence type="ECO:0000250" key="1">
    <source>
        <dbReference type="UniProtKB" id="P32232"/>
    </source>
</evidence>
<evidence type="ECO:0000250" key="2">
    <source>
        <dbReference type="UniProtKB" id="P35520"/>
    </source>
</evidence>
<evidence type="ECO:0000255" key="3">
    <source>
        <dbReference type="PROSITE-ProRule" id="PRU00703"/>
    </source>
</evidence>
<evidence type="ECO:0000303" key="4">
    <source>
    </source>
</evidence>
<evidence type="ECO:0000303" key="5">
    <source>
    </source>
</evidence>
<evidence type="ECO:0000305" key="6"/>
<protein>
    <recommendedName>
        <fullName evidence="6">Cystathionine beta-synthase</fullName>
        <ecNumber evidence="2">4.2.1.22</ecNumber>
    </recommendedName>
    <alternativeName>
        <fullName>Beta-thionase</fullName>
    </alternativeName>
    <alternativeName>
        <fullName>Serine sulfhydrase</fullName>
    </alternativeName>
</protein>
<feature type="chain" id="PRO_0000262592" description="Cystathionine beta-synthase">
    <location>
        <begin position="1"/>
        <end position="561"/>
    </location>
</feature>
<feature type="domain" description="CBS" evidence="3">
    <location>
        <begin position="414"/>
        <end position="474"/>
    </location>
</feature>
<feature type="binding site" description="axial binding residue" evidence="2">
    <location>
        <position position="49"/>
    </location>
    <ligand>
        <name>heme</name>
        <dbReference type="ChEBI" id="CHEBI:30413"/>
    </ligand>
    <ligandPart>
        <name>Fe</name>
        <dbReference type="ChEBI" id="CHEBI:18248"/>
    </ligandPart>
</feature>
<feature type="binding site" description="axial binding residue" evidence="2">
    <location>
        <position position="62"/>
    </location>
    <ligand>
        <name>heme</name>
        <dbReference type="ChEBI" id="CHEBI:30413"/>
    </ligand>
    <ligandPart>
        <name>Fe</name>
        <dbReference type="ChEBI" id="CHEBI:18248"/>
    </ligandPart>
</feature>
<feature type="binding site" evidence="2">
    <location>
        <position position="146"/>
    </location>
    <ligand>
        <name>pyridoxal 5'-phosphate</name>
        <dbReference type="ChEBI" id="CHEBI:597326"/>
    </ligand>
</feature>
<feature type="binding site" evidence="2">
    <location>
        <begin position="253"/>
        <end position="257"/>
    </location>
    <ligand>
        <name>pyridoxal 5'-phosphate</name>
        <dbReference type="ChEBI" id="CHEBI:597326"/>
    </ligand>
</feature>
<feature type="binding site" evidence="2">
    <location>
        <position position="346"/>
    </location>
    <ligand>
        <name>pyridoxal 5'-phosphate</name>
        <dbReference type="ChEBI" id="CHEBI:597326"/>
    </ligand>
</feature>
<feature type="modified residue" description="N6-(pyridoxal phosphate)lysine" evidence="2">
    <location>
        <position position="116"/>
    </location>
</feature>
<feature type="modified residue" description="Phosphoserine" evidence="2">
    <location>
        <position position="196"/>
    </location>
</feature>
<feature type="cross-link" description="Glycyl lysine isopeptide (Lys-Gly) (interchain with G-Cter in SUMO)" evidence="2">
    <location>
        <position position="208"/>
    </location>
</feature>
<feature type="splice variant" id="VSP_021790" description="In isoform 2." evidence="4 5">
    <original>SRDQAWSGVVGGPTD</original>
    <variation>Y</variation>
    <location>
        <begin position="514"/>
        <end position="528"/>
    </location>
</feature>
<accession>Q91WT9</accession>
<accession>Q91WU3</accession>